<protein>
    <recommendedName>
        <fullName>Esterase EstA</fullName>
        <ecNumber evidence="3 6">3.1.1.1</ecNumber>
    </recommendedName>
    <alternativeName>
        <fullName>Autotransporter esterase EstA</fullName>
    </alternativeName>
</protein>
<sequence>MIRMALKPLVAACLLASLSTAPQAAPSPYSTLVVFGDSLSDAGQFPDPAGPAGSTSRFTNRVGPTYQNGSGEIFGPTAPMLLGNQLGIAPGDLAASTSPVNAQQGIADGNNWAVGGYRTDQIYDSITAANGSLIERDNTLLRSRDGYLVDRARQGLGADPNALYYITGGGNDFLQGRILNDVQAQQAAGRLVDSVQALQQAGARYIVVWLLPDLGLTPATFGGPLQPFASQLSGTFNAELTAQLSQAGANVIPLNIPLLLKEGMANPASFGLAADQNLIGTCFSGNGCTMNPTYGINGSTPDPSKLLFNDSVHPTITGQRLIADYTYSLLSAPWELTLLPEMAHGTLRAYQDELRSQWQADWENWQNVGQWRGFVGGGGQRLDFDSQDSAASGDGNGYNLTLGGSYRIDEAWRAGVAAGFYRQKLEAGAKDSDYRMNSYMASAFVQYQENRWWADAALTGGYLDYDDLKRKFALGGGERSEKGDTNGHLWAFSARLGYDIAQQADSPWHLSPFVSADYARVEVDGYSEKGASATALDYDDQKRSSKRLGAGLQGKYAFGSDTQLFAEYAHEREYEDDTQDLTMSLNSLPGNRFTLEGYTPQDHLNRVSLGFSQKLAPELSLRGGYNWRKGEDDTQQSVSLALSLDF</sequence>
<accession>O33407</accession>
<accession>Q7DC45</accession>
<accession>Q9F3Y2</accession>
<reference key="1">
    <citation type="journal article" date="1999" name="J. Bacteriol.">
        <title>A novel lipolytic enzyme located in the outer membrane of Pseudomonas aeruginosa.</title>
        <authorList>
            <person name="Wilhelm S."/>
            <person name="Tommassen J."/>
            <person name="Jaeger K.-E."/>
        </authorList>
    </citation>
    <scope>NUCLEOTIDE SEQUENCE [GENOMIC DNA]</scope>
    <scope>CATALYTIC ACTIVITY</scope>
    <scope>SUBCELLULAR LOCATION</scope>
    <source>
        <strain>ATCC 15692 / DSM 22644 / CIP 104116 / JCM 14847 / LMG 12228 / 1C / PRS 101 / PAO1</strain>
    </source>
</reference>
<reference key="2">
    <citation type="submission" date="2000-04" db="EMBL/GenBank/DDBJ databases">
        <title>Evolutionary origins of the autotransporter proteins.</title>
        <authorList>
            <person name="Henderson I.R."/>
            <person name="Nataro J.P."/>
            <person name="Cappello R."/>
            <person name="Stein C."/>
        </authorList>
    </citation>
    <scope>NUCLEOTIDE SEQUENCE [GENOMIC DNA]</scope>
    <source>
        <strain>ATCC 15692 / DSM 22644 / CIP 104116 / JCM 14847 / LMG 12228 / 1C / PRS 101 / PAO1</strain>
    </source>
</reference>
<reference key="3">
    <citation type="journal article" date="2000" name="Nature">
        <title>Complete genome sequence of Pseudomonas aeruginosa PAO1, an opportunistic pathogen.</title>
        <authorList>
            <person name="Stover C.K."/>
            <person name="Pham X.-Q.T."/>
            <person name="Erwin A.L."/>
            <person name="Mizoguchi S.D."/>
            <person name="Warrener P."/>
            <person name="Hickey M.J."/>
            <person name="Brinkman F.S.L."/>
            <person name="Hufnagle W.O."/>
            <person name="Kowalik D.J."/>
            <person name="Lagrou M."/>
            <person name="Garber R.L."/>
            <person name="Goltry L."/>
            <person name="Tolentino E."/>
            <person name="Westbrock-Wadman S."/>
            <person name="Yuan Y."/>
            <person name="Brody L.L."/>
            <person name="Coulter S.N."/>
            <person name="Folger K.R."/>
            <person name="Kas A."/>
            <person name="Larbig K."/>
            <person name="Lim R.M."/>
            <person name="Smith K.A."/>
            <person name="Spencer D.H."/>
            <person name="Wong G.K.-S."/>
            <person name="Wu Z."/>
            <person name="Paulsen I.T."/>
            <person name="Reizer J."/>
            <person name="Saier M.H. Jr."/>
            <person name="Hancock R.E.W."/>
            <person name="Lory S."/>
            <person name="Olson M.V."/>
        </authorList>
    </citation>
    <scope>NUCLEOTIDE SEQUENCE [LARGE SCALE GENOMIC DNA]</scope>
    <source>
        <strain>ATCC 15692 / DSM 22644 / CIP 104116 / JCM 14847 / LMG 12228 / 1C / PRS 101 / PAO1</strain>
    </source>
</reference>
<reference key="4">
    <citation type="journal article" date="2007" name="J. Bacteriol.">
        <title>The autotransporter esterase EstA of Pseudomonas aeruginosa is required for rhamnolipid production, cell motility, and biofilm formation.</title>
        <authorList>
            <person name="Wilhelm S."/>
            <person name="Gdynia A."/>
            <person name="Tielen P."/>
            <person name="Rosenau F."/>
            <person name="Jaeger K.E."/>
        </authorList>
    </citation>
    <scope>FUNCTION</scope>
    <scope>SUBCELLULAR LOCATION</scope>
    <scope>DISRUPTION PHENOTYPE</scope>
    <scope>MUTAGENESIS OF SER-38</scope>
    <scope>OVEREXPRESSION</scope>
    <source>
        <strain>ATCC 15692 / DSM 22644 / CIP 104116 / JCM 14847 / LMG 12228 / 1C / PRS 101 / PAO1</strain>
    </source>
</reference>
<reference key="5">
    <citation type="journal article" date="2010" name="ChemBioChem">
        <title>Probing enzyme promiscuity of SGNH hydrolases.</title>
        <authorList>
            <person name="Lescic Asler I."/>
            <person name="Ivic N."/>
            <person name="Kovacic F."/>
            <person name="Schell S."/>
            <person name="Knorr J."/>
            <person name="Krauss U."/>
            <person name="Wilhelm S."/>
            <person name="Kojic-Prodic B."/>
            <person name="Jaeger K.E."/>
        </authorList>
    </citation>
    <scope>FUNCTION</scope>
    <scope>CATALYTIC ACTIVITY</scope>
    <scope>SUBSTRATE SPECIFICITY</scope>
    <scope>KINETIC PARAMETERS</scope>
</reference>
<reference key="6">
    <citation type="journal article" date="2017" name="PLoS ONE">
        <title>Enhanced rhamnolipid production by Pseudomonas aeruginosa overexpressing estA in a simple medium.</title>
        <authorList>
            <person name="Dobler L."/>
            <person name="de Carvalho B.R."/>
            <person name="Alves W.S."/>
            <person name="Neves B.C."/>
            <person name="Freire D.M.G."/>
            <person name="Almeida R.V."/>
        </authorList>
    </citation>
    <scope>OVEREXPRESSION</scope>
    <source>
        <strain>ATCC 15692 / DSM 22644 / CIP 104116 / JCM 14847 / LMG 12228 / 1C / PRS 101 / PAO1</strain>
    </source>
</reference>
<reference key="7">
    <citation type="journal article" date="2010" name="J. Mol. Biol.">
        <title>Crystal structure of a full-length autotransporter.</title>
        <authorList>
            <person name="van den Berg B."/>
        </authorList>
    </citation>
    <scope>X-RAY CRYSTALLOGRAPHY (2.5 ANGSTROMS) OF 25-646</scope>
    <scope>DOMAIN</scope>
</reference>
<name>ESTA_PSEAE</name>
<comment type="function">
    <text evidence="4 6">Esterase whose enzymatic activity is required for rhamnolipid production, all kinds of cell motility (swimming, swarming, and twitching), and biofilm formation; the exact role of EstA in these processes is unclear. In vitro, has pronounced esterase activities towards p-nitrophenyl esters of short acyl chain length (C4-C6) and Tween detergents. Also shows relatively high activity towards beta-naphthyl butyrate, whereas its activities towards triacylglycerols and acyls-CoA are negligible.</text>
</comment>
<comment type="catalytic activity">
    <reaction evidence="3 6">
        <text>a carboxylic ester + H2O = an alcohol + a carboxylate + H(+)</text>
        <dbReference type="Rhea" id="RHEA:21164"/>
        <dbReference type="ChEBI" id="CHEBI:15377"/>
        <dbReference type="ChEBI" id="CHEBI:15378"/>
        <dbReference type="ChEBI" id="CHEBI:29067"/>
        <dbReference type="ChEBI" id="CHEBI:30879"/>
        <dbReference type="ChEBI" id="CHEBI:33308"/>
        <dbReference type="EC" id="3.1.1.1"/>
    </reaction>
</comment>
<comment type="biophysicochemical properties">
    <kinetics>
        <KM evidence="6">0.7 mM for p-nitrophenyl butyrate</KM>
        <Vmax evidence="6">220.0 umol/min/mg enzyme with p-nitrophenyl butyrate as substrate</Vmax>
    </kinetics>
</comment>
<comment type="subcellular location">
    <subcellularLocation>
        <location evidence="3 4">Cell outer membrane</location>
        <topology evidence="3 4">Multi-pass membrane protein</topology>
    </subcellularLocation>
</comment>
<comment type="domain">
    <text evidence="5">Contains a C-terminal autotransporter domain that integrates into the outer membrane and enables the translocation of the catalytic N-terminal domain to the bacterial cell surface.</text>
</comment>
<comment type="disruption phenotype">
    <text evidence="4">Strains lacking this gene produce only marginal amounts of extracellular rhamnolipids. They also show no swarming motility, and both other forms of surface motility, swimming and twitching, are completely absent in these mutant cells. Biofilm formation is also affected.</text>
</comment>
<comment type="miscellaneous">
    <text evidence="4 7">Overexpression of EstA results in an increased production of rhamnolipids (PubMed:17631636). Rhamnolipid production is strongly influenced by the C/N ratio of the environment. At a C/N ratio of 83.2, a modified P.aeruginosa strain capable of overexpressing the estA gene can produce up to 3.9 times more rhamnolipids than the wild-type strain (PubMed:28837648).</text>
</comment>
<comment type="similarity">
    <text evidence="8">Belongs to the 'GDSL' lipolytic enzyme family.</text>
</comment>
<comment type="sequence caution" evidence="8">
    <conflict type="erroneous initiation">
        <sequence resource="EMBL-CDS" id="CAC14200"/>
    </conflict>
</comment>
<feature type="signal peptide" evidence="1">
    <location>
        <begin position="1"/>
        <end position="24"/>
    </location>
</feature>
<feature type="chain" id="PRO_0000017845" description="Esterase EstA">
    <location>
        <begin position="25"/>
        <end position="646"/>
    </location>
</feature>
<feature type="topological domain" description="Extracellular" evidence="1">
    <location>
        <begin position="25"/>
        <end position="397"/>
    </location>
</feature>
<feature type="transmembrane region" description="Beta stranded" evidence="1">
    <location>
        <begin position="398"/>
        <end position="408"/>
    </location>
</feature>
<feature type="topological domain" description="Periplasmic" evidence="1">
    <location>
        <begin position="409"/>
        <end position="410"/>
    </location>
</feature>
<feature type="transmembrane region" description="Beta stranded" evidence="1">
    <location>
        <begin position="411"/>
        <end position="421"/>
    </location>
</feature>
<feature type="topological domain" description="Extracellular" evidence="1">
    <location>
        <begin position="422"/>
        <end position="437"/>
    </location>
</feature>
<feature type="transmembrane region" description="Beta stranded" evidence="1">
    <location>
        <begin position="438"/>
        <end position="447"/>
    </location>
</feature>
<feature type="topological domain" description="Periplasmic" evidence="1">
    <location>
        <begin position="448"/>
        <end position="451"/>
    </location>
</feature>
<feature type="transmembrane region" description="Beta stranded" evidence="1">
    <location>
        <begin position="452"/>
        <end position="461"/>
    </location>
</feature>
<feature type="topological domain" description="Extracellular" evidence="1">
    <location>
        <begin position="462"/>
        <end position="488"/>
    </location>
</feature>
<feature type="transmembrane region" description="Beta stranded" evidence="1">
    <location>
        <begin position="489"/>
        <end position="500"/>
    </location>
</feature>
<feature type="topological domain" description="Periplasmic" evidence="1">
    <location>
        <begin position="501"/>
        <end position="507"/>
    </location>
</feature>
<feature type="transmembrane region" description="Beta stranded" evidence="1">
    <location>
        <begin position="508"/>
        <end position="518"/>
    </location>
</feature>
<feature type="topological domain" description="Extracellular" evidence="1">
    <location>
        <begin position="519"/>
        <end position="547"/>
    </location>
</feature>
<feature type="transmembrane region" description="Beta stranded" evidence="1">
    <location>
        <begin position="548"/>
        <end position="558"/>
    </location>
</feature>
<feature type="topological domain" description="Periplasmic" evidence="1">
    <location>
        <begin position="559"/>
        <end position="561"/>
    </location>
</feature>
<feature type="transmembrane region" description="Beta stranded" evidence="1">
    <location>
        <begin position="562"/>
        <end position="571"/>
    </location>
</feature>
<feature type="topological domain" description="Extracellular" evidence="1">
    <location>
        <begin position="572"/>
        <end position="605"/>
    </location>
</feature>
<feature type="transmembrane region" description="Beta stranded" evidence="1">
    <location>
        <begin position="606"/>
        <end position="615"/>
    </location>
</feature>
<feature type="topological domain" description="Periplasmic" evidence="1">
    <location>
        <begin position="616"/>
        <end position="618"/>
    </location>
</feature>
<feature type="transmembrane region" description="Beta stranded" evidence="1">
    <location>
        <begin position="619"/>
        <end position="628"/>
    </location>
</feature>
<feature type="topological domain" description="Extracellular" evidence="1">
    <location>
        <begin position="629"/>
        <end position="636"/>
    </location>
</feature>
<feature type="transmembrane region" description="Beta stranded" evidence="1">
    <location>
        <begin position="637"/>
        <end position="646"/>
    </location>
</feature>
<feature type="domain" description="Autotransporter" evidence="2">
    <location>
        <begin position="366"/>
        <end position="646"/>
    </location>
</feature>
<feature type="active site" description="Nucleophile" evidence="8">
    <location>
        <position position="38"/>
    </location>
</feature>
<feature type="active site" evidence="8">
    <location>
        <position position="310"/>
    </location>
</feature>
<feature type="active site" evidence="8">
    <location>
        <position position="313"/>
    </location>
</feature>
<feature type="mutagenesis site" description="Loss of catalytic activity. Fails to complement the estA mutant phenotypes." evidence="4">
    <original>S</original>
    <variation>A</variation>
    <location>
        <position position="38"/>
    </location>
</feature>
<feature type="strand" evidence="9">
    <location>
        <begin position="32"/>
        <end position="35"/>
    </location>
</feature>
<feature type="turn" evidence="9">
    <location>
        <begin position="38"/>
        <end position="40"/>
    </location>
</feature>
<feature type="strand" evidence="9">
    <location>
        <begin position="63"/>
        <end position="65"/>
    </location>
</feature>
<feature type="helix" evidence="9">
    <location>
        <begin position="78"/>
        <end position="85"/>
    </location>
</feature>
<feature type="helix" evidence="9">
    <location>
        <begin position="90"/>
        <end position="93"/>
    </location>
</feature>
<feature type="strand" evidence="9">
    <location>
        <begin position="94"/>
        <end position="97"/>
    </location>
</feature>
<feature type="helix" evidence="9">
    <location>
        <begin position="99"/>
        <end position="104"/>
    </location>
</feature>
<feature type="helix" evidence="9">
    <location>
        <begin position="119"/>
        <end position="127"/>
    </location>
</feature>
<feature type="strand" evidence="9">
    <location>
        <begin position="132"/>
        <end position="136"/>
    </location>
</feature>
<feature type="strand" evidence="9">
    <location>
        <begin position="139"/>
        <end position="144"/>
    </location>
</feature>
<feature type="helix" evidence="9">
    <location>
        <begin position="147"/>
        <end position="152"/>
    </location>
</feature>
<feature type="turn" evidence="9">
    <location>
        <begin position="153"/>
        <end position="155"/>
    </location>
</feature>
<feature type="strand" evidence="9">
    <location>
        <begin position="162"/>
        <end position="166"/>
    </location>
</feature>
<feature type="helix" evidence="9">
    <location>
        <begin position="170"/>
        <end position="174"/>
    </location>
</feature>
<feature type="helix" evidence="9">
    <location>
        <begin position="181"/>
        <end position="200"/>
    </location>
</feature>
<feature type="strand" evidence="9">
    <location>
        <begin position="206"/>
        <end position="209"/>
    </location>
</feature>
<feature type="helix" evidence="9">
    <location>
        <begin position="214"/>
        <end position="216"/>
    </location>
</feature>
<feature type="turn" evidence="9">
    <location>
        <begin position="218"/>
        <end position="222"/>
    </location>
</feature>
<feature type="helix" evidence="9">
    <location>
        <begin position="226"/>
        <end position="247"/>
    </location>
</feature>
<feature type="strand" evidence="9">
    <location>
        <begin position="251"/>
        <end position="254"/>
    </location>
</feature>
<feature type="helix" evidence="9">
    <location>
        <begin position="256"/>
        <end position="265"/>
    </location>
</feature>
<feature type="helix" evidence="9">
    <location>
        <begin position="267"/>
        <end position="270"/>
    </location>
</feature>
<feature type="turn" evidence="9">
    <location>
        <begin position="278"/>
        <end position="280"/>
    </location>
</feature>
<feature type="strand" evidence="9">
    <location>
        <begin position="282"/>
        <end position="284"/>
    </location>
</feature>
<feature type="turn" evidence="9">
    <location>
        <begin position="292"/>
        <end position="294"/>
    </location>
</feature>
<feature type="strand" evidence="9">
    <location>
        <begin position="298"/>
        <end position="300"/>
    </location>
</feature>
<feature type="helix" evidence="9">
    <location>
        <begin position="303"/>
        <end position="305"/>
    </location>
</feature>
<feature type="strand" evidence="9">
    <location>
        <begin position="307"/>
        <end position="312"/>
    </location>
</feature>
<feature type="helix" evidence="9">
    <location>
        <begin position="316"/>
        <end position="331"/>
    </location>
</feature>
<feature type="helix" evidence="9">
    <location>
        <begin position="333"/>
        <end position="336"/>
    </location>
</feature>
<feature type="helix" evidence="9">
    <location>
        <begin position="339"/>
        <end position="361"/>
    </location>
</feature>
<feature type="strand" evidence="9">
    <location>
        <begin position="372"/>
        <end position="384"/>
    </location>
</feature>
<feature type="strand" evidence="9">
    <location>
        <begin position="393"/>
        <end position="407"/>
    </location>
</feature>
<feature type="strand" evidence="9">
    <location>
        <begin position="409"/>
        <end position="427"/>
    </location>
</feature>
<feature type="turn" evidence="9">
    <location>
        <begin position="428"/>
        <end position="431"/>
    </location>
</feature>
<feature type="strand" evidence="9">
    <location>
        <begin position="432"/>
        <end position="449"/>
    </location>
</feature>
<feature type="strand" evidence="9">
    <location>
        <begin position="452"/>
        <end position="474"/>
    </location>
</feature>
<feature type="strand" evidence="9">
    <location>
        <begin position="477"/>
        <end position="498"/>
    </location>
</feature>
<feature type="strand" evidence="9">
    <location>
        <begin position="507"/>
        <end position="523"/>
    </location>
</feature>
<feature type="strand" evidence="9">
    <location>
        <begin position="536"/>
        <end position="538"/>
    </location>
</feature>
<feature type="strand" evidence="9">
    <location>
        <begin position="541"/>
        <end position="574"/>
    </location>
</feature>
<feature type="strand" evidence="9">
    <location>
        <begin position="580"/>
        <end position="585"/>
    </location>
</feature>
<feature type="strand" evidence="9">
    <location>
        <begin position="593"/>
        <end position="596"/>
    </location>
</feature>
<feature type="strand" evidence="9">
    <location>
        <begin position="602"/>
        <end position="616"/>
    </location>
</feature>
<feature type="strand" evidence="9">
    <location>
        <begin position="619"/>
        <end position="630"/>
    </location>
</feature>
<feature type="strand" evidence="9">
    <location>
        <begin position="633"/>
        <end position="645"/>
    </location>
</feature>
<keyword id="KW-0002">3D-structure</keyword>
<keyword id="KW-0998">Cell outer membrane</keyword>
<keyword id="KW-0378">Hydrolase</keyword>
<keyword id="KW-0472">Membrane</keyword>
<keyword id="KW-1185">Reference proteome</keyword>
<keyword id="KW-0719">Serine esterase</keyword>
<keyword id="KW-0732">Signal</keyword>
<keyword id="KW-0812">Transmembrane</keyword>
<keyword id="KW-1134">Transmembrane beta strand</keyword>
<proteinExistence type="evidence at protein level"/>
<evidence type="ECO:0000255" key="1"/>
<evidence type="ECO:0000255" key="2">
    <source>
        <dbReference type="PROSITE-ProRule" id="PRU00556"/>
    </source>
</evidence>
<evidence type="ECO:0000269" key="3">
    <source>
    </source>
</evidence>
<evidence type="ECO:0000269" key="4">
    <source>
    </source>
</evidence>
<evidence type="ECO:0000269" key="5">
    <source>
    </source>
</evidence>
<evidence type="ECO:0000269" key="6">
    <source>
    </source>
</evidence>
<evidence type="ECO:0000269" key="7">
    <source>
    </source>
</evidence>
<evidence type="ECO:0000305" key="8"/>
<evidence type="ECO:0007829" key="9">
    <source>
        <dbReference type="PDB" id="3KVN"/>
    </source>
</evidence>
<gene>
    <name type="primary">estA</name>
    <name type="synonym">papA</name>
    <name type="ordered locus">PA5112</name>
</gene>
<organism>
    <name type="scientific">Pseudomonas aeruginosa (strain ATCC 15692 / DSM 22644 / CIP 104116 / JCM 14847 / LMG 12228 / 1C / PRS 101 / PAO1)</name>
    <dbReference type="NCBI Taxonomy" id="208964"/>
    <lineage>
        <taxon>Bacteria</taxon>
        <taxon>Pseudomonadati</taxon>
        <taxon>Pseudomonadota</taxon>
        <taxon>Gammaproteobacteria</taxon>
        <taxon>Pseudomonadales</taxon>
        <taxon>Pseudomonadaceae</taxon>
        <taxon>Pseudomonas</taxon>
    </lineage>
</organism>
<dbReference type="EC" id="3.1.1.1" evidence="3 6"/>
<dbReference type="EMBL" id="AF005091">
    <property type="protein sequence ID" value="AAB61674.1"/>
    <property type="molecule type" value="Genomic_DNA"/>
</dbReference>
<dbReference type="EMBL" id="AJ277638">
    <property type="protein sequence ID" value="CAC14200.1"/>
    <property type="status" value="ALT_INIT"/>
    <property type="molecule type" value="Genomic_DNA"/>
</dbReference>
<dbReference type="EMBL" id="AE004091">
    <property type="protein sequence ID" value="AAG08497.1"/>
    <property type="molecule type" value="Genomic_DNA"/>
</dbReference>
<dbReference type="PIR" id="G83006">
    <property type="entry name" value="G83006"/>
</dbReference>
<dbReference type="RefSeq" id="NP_253799.1">
    <property type="nucleotide sequence ID" value="NC_002516.2"/>
</dbReference>
<dbReference type="RefSeq" id="WP_003115524.1">
    <property type="nucleotide sequence ID" value="NZ_QZGE01000002.1"/>
</dbReference>
<dbReference type="PDB" id="3KVN">
    <property type="method" value="X-ray"/>
    <property type="resolution" value="2.50 A"/>
    <property type="chains" value="A/X=25-646"/>
</dbReference>
<dbReference type="PDBsum" id="3KVN"/>
<dbReference type="SMR" id="O33407"/>
<dbReference type="STRING" id="208964.PA5112"/>
<dbReference type="DrugBank" id="DB04233">
    <property type="generic name" value="(Hydroxyethyloxy)Tri(Ethyloxy)Octane"/>
</dbReference>
<dbReference type="TCDB" id="1.B.12.5.9">
    <property type="family name" value="the autotransporter-1 (at-1) family"/>
</dbReference>
<dbReference type="PaxDb" id="208964-PA5112"/>
<dbReference type="GeneID" id="878826"/>
<dbReference type="KEGG" id="pae:PA5112"/>
<dbReference type="PATRIC" id="fig|208964.12.peg.5357"/>
<dbReference type="PseudoCAP" id="PA5112"/>
<dbReference type="HOGENOM" id="CLU_023098_5_0_6"/>
<dbReference type="InParanoid" id="O33407"/>
<dbReference type="OrthoDB" id="5292073at2"/>
<dbReference type="PhylomeDB" id="O33407"/>
<dbReference type="BioCyc" id="PAER208964:G1FZ6-5227-MONOMER"/>
<dbReference type="BRENDA" id="3.1.1.1">
    <property type="organism ID" value="5087"/>
</dbReference>
<dbReference type="SABIO-RK" id="O33407"/>
<dbReference type="EvolutionaryTrace" id="O33407"/>
<dbReference type="Proteomes" id="UP000002438">
    <property type="component" value="Chromosome"/>
</dbReference>
<dbReference type="GO" id="GO:0009279">
    <property type="term" value="C:cell outer membrane"/>
    <property type="evidence" value="ECO:0000314"/>
    <property type="project" value="UniProtKB"/>
</dbReference>
<dbReference type="GO" id="GO:0106435">
    <property type="term" value="F:carboxylesterase activity"/>
    <property type="evidence" value="ECO:0000314"/>
    <property type="project" value="UniProtKB"/>
</dbReference>
<dbReference type="GO" id="GO:0052689">
    <property type="term" value="F:carboxylic ester hydrolase activity"/>
    <property type="evidence" value="ECO:0000315"/>
    <property type="project" value="PseudoCAP"/>
</dbReference>
<dbReference type="GO" id="GO:0016298">
    <property type="term" value="F:lipase activity"/>
    <property type="evidence" value="ECO:0007669"/>
    <property type="project" value="InterPro"/>
</dbReference>
<dbReference type="GO" id="GO:0071973">
    <property type="term" value="P:bacterial-type flagellum-dependent cell motility"/>
    <property type="evidence" value="ECO:0000315"/>
    <property type="project" value="PseudoCAP"/>
</dbReference>
<dbReference type="GO" id="GO:0071978">
    <property type="term" value="P:bacterial-type flagellum-dependent swarming motility"/>
    <property type="evidence" value="ECO:0000314"/>
    <property type="project" value="PseudoCAP"/>
</dbReference>
<dbReference type="GO" id="GO:0048870">
    <property type="term" value="P:cell motility"/>
    <property type="evidence" value="ECO:0000315"/>
    <property type="project" value="UniProtKB"/>
</dbReference>
<dbReference type="GO" id="GO:0009247">
    <property type="term" value="P:glycolipid biosynthetic process"/>
    <property type="evidence" value="ECO:0000315"/>
    <property type="project" value="PseudoCAP"/>
</dbReference>
<dbReference type="GO" id="GO:0008610">
    <property type="term" value="P:lipid biosynthetic process"/>
    <property type="evidence" value="ECO:0000315"/>
    <property type="project" value="UniProtKB"/>
</dbReference>
<dbReference type="GO" id="GO:0044010">
    <property type="term" value="P:single-species biofilm formation"/>
    <property type="evidence" value="ECO:0000315"/>
    <property type="project" value="PseudoCAP"/>
</dbReference>
<dbReference type="CDD" id="cd01847">
    <property type="entry name" value="Triacylglycerol_lipase_like"/>
    <property type="match status" value="1"/>
</dbReference>
<dbReference type="FunFam" id="2.40.128.130:FF:000004">
    <property type="entry name" value="Autotransporter domain-containing esterase"/>
    <property type="match status" value="1"/>
</dbReference>
<dbReference type="FunFam" id="3.40.50.1110:FF:000027">
    <property type="entry name" value="Esterase EstA"/>
    <property type="match status" value="1"/>
</dbReference>
<dbReference type="Gene3D" id="2.40.128.130">
    <property type="entry name" value="Autotransporter beta-domain"/>
    <property type="match status" value="1"/>
</dbReference>
<dbReference type="Gene3D" id="3.40.50.1110">
    <property type="entry name" value="SGNH hydrolase"/>
    <property type="match status" value="1"/>
</dbReference>
<dbReference type="InterPro" id="IPR005546">
    <property type="entry name" value="Autotransporte_beta"/>
</dbReference>
<dbReference type="InterPro" id="IPR036709">
    <property type="entry name" value="Autotransporte_beta_dom_sf"/>
</dbReference>
<dbReference type="InterPro" id="IPR048099">
    <property type="entry name" value="Esterase_EstP/EstA"/>
</dbReference>
<dbReference type="InterPro" id="IPR001087">
    <property type="entry name" value="GDSL"/>
</dbReference>
<dbReference type="InterPro" id="IPR050592">
    <property type="entry name" value="GDSL_lipolytic_enzyme"/>
</dbReference>
<dbReference type="InterPro" id="IPR017186">
    <property type="entry name" value="Lipase_autotranspt_EstA"/>
</dbReference>
<dbReference type="InterPro" id="IPR008265">
    <property type="entry name" value="Lipase_GDSL_AS"/>
</dbReference>
<dbReference type="InterPro" id="IPR036514">
    <property type="entry name" value="SGNH_hydro_sf"/>
</dbReference>
<dbReference type="NCBIfam" id="NF041609">
    <property type="entry name" value="esterase_EstP"/>
    <property type="match status" value="1"/>
</dbReference>
<dbReference type="PANTHER" id="PTHR45642">
    <property type="entry name" value="GDSL ESTERASE/LIPASE EXL3"/>
    <property type="match status" value="1"/>
</dbReference>
<dbReference type="PANTHER" id="PTHR45642:SF139">
    <property type="entry name" value="SGNH HYDROLASE-TYPE ESTERASE DOMAIN-CONTAINING PROTEIN"/>
    <property type="match status" value="1"/>
</dbReference>
<dbReference type="Pfam" id="PF03797">
    <property type="entry name" value="Autotransporter"/>
    <property type="match status" value="1"/>
</dbReference>
<dbReference type="Pfam" id="PF00657">
    <property type="entry name" value="Lipase_GDSL"/>
    <property type="match status" value="1"/>
</dbReference>
<dbReference type="PIRSF" id="PIRSF037375">
    <property type="entry name" value="Autotrns_EstA"/>
    <property type="match status" value="1"/>
</dbReference>
<dbReference type="SMART" id="SM00869">
    <property type="entry name" value="Autotransporter"/>
    <property type="match status" value="1"/>
</dbReference>
<dbReference type="SUPFAM" id="SSF103515">
    <property type="entry name" value="Autotransporter"/>
    <property type="match status" value="1"/>
</dbReference>
<dbReference type="SUPFAM" id="SSF52266">
    <property type="entry name" value="SGNH hydrolase"/>
    <property type="match status" value="1"/>
</dbReference>
<dbReference type="PROSITE" id="PS51208">
    <property type="entry name" value="AUTOTRANSPORTER"/>
    <property type="match status" value="1"/>
</dbReference>
<dbReference type="PROSITE" id="PS01098">
    <property type="entry name" value="LIPASE_GDSL_SER"/>
    <property type="match status" value="1"/>
</dbReference>